<accession>Q634M0</accession>
<gene>
    <name evidence="1" type="primary">gpr</name>
    <name type="ordered locus">BCE33L4068</name>
</gene>
<feature type="propeptide" id="PRO_0000316070" evidence="1">
    <location>
        <begin position="1"/>
        <end position="15"/>
    </location>
</feature>
<feature type="chain" id="PRO_1000051609" description="Germination protease">
    <location>
        <begin position="16"/>
        <end position="368"/>
    </location>
</feature>
<reference key="1">
    <citation type="journal article" date="2006" name="J. Bacteriol.">
        <title>Pathogenomic sequence analysis of Bacillus cereus and Bacillus thuringiensis isolates closely related to Bacillus anthracis.</title>
        <authorList>
            <person name="Han C.S."/>
            <person name="Xie G."/>
            <person name="Challacombe J.F."/>
            <person name="Altherr M.R."/>
            <person name="Bhotika S.S."/>
            <person name="Bruce D."/>
            <person name="Campbell C.S."/>
            <person name="Campbell M.L."/>
            <person name="Chen J."/>
            <person name="Chertkov O."/>
            <person name="Cleland C."/>
            <person name="Dimitrijevic M."/>
            <person name="Doggett N.A."/>
            <person name="Fawcett J.J."/>
            <person name="Glavina T."/>
            <person name="Goodwin L.A."/>
            <person name="Hill K.K."/>
            <person name="Hitchcock P."/>
            <person name="Jackson P.J."/>
            <person name="Keim P."/>
            <person name="Kewalramani A.R."/>
            <person name="Longmire J."/>
            <person name="Lucas S."/>
            <person name="Malfatti S."/>
            <person name="McMurry K."/>
            <person name="Meincke L.J."/>
            <person name="Misra M."/>
            <person name="Moseman B.L."/>
            <person name="Mundt M."/>
            <person name="Munk A.C."/>
            <person name="Okinaka R.T."/>
            <person name="Parson-Quintana B."/>
            <person name="Reilly L.P."/>
            <person name="Richardson P."/>
            <person name="Robinson D.L."/>
            <person name="Rubin E."/>
            <person name="Saunders E."/>
            <person name="Tapia R."/>
            <person name="Tesmer J.G."/>
            <person name="Thayer N."/>
            <person name="Thompson L.S."/>
            <person name="Tice H."/>
            <person name="Ticknor L.O."/>
            <person name="Wills P.L."/>
            <person name="Brettin T.S."/>
            <person name="Gilna P."/>
        </authorList>
    </citation>
    <scope>NUCLEOTIDE SEQUENCE [LARGE SCALE GENOMIC DNA]</scope>
    <source>
        <strain>ZK / E33L</strain>
    </source>
</reference>
<sequence length="368" mass="40605">MKEPLDLSKYSVRTDLAVEAHQMLQERQEEQQQGIQGVIVKEREEEGIIITKVTIDEVASESMGKKPGNYLTLEVQGIRQQDTELQQKVERIFAKEFSYFLEEVGVTKEASCLIVGLGNWNVTPDALGPIVVENVLVTRHLFQLQPESVEEGFRPVSAIRPGVMGITGIETSDVIYGIIEKTKPDFVIAIDALAARSIERVNSTIQISDTGIHPGSGVGNKRKELSKETLGIPVIAIGVPTVVDAVSITSDTIDFILKHFGREMKEGNKPSRSLLPAGFTFGEKKKLTEEDMPDEKSRNMFLGAVGTLEDEEKRKLIYEVLSPLGHNLMVTPKEVDAFIEDMANVIASGLNAALHHQIDQDNTGAYTH</sequence>
<dbReference type="EC" id="3.4.24.78" evidence="1"/>
<dbReference type="EMBL" id="CP000001">
    <property type="protein sequence ID" value="AAU16202.1"/>
    <property type="molecule type" value="Genomic_DNA"/>
</dbReference>
<dbReference type="RefSeq" id="WP_000662639.1">
    <property type="nucleotide sequence ID" value="NZ_CP009968.1"/>
</dbReference>
<dbReference type="SMR" id="Q634M0"/>
<dbReference type="MEROPS" id="A25.001"/>
<dbReference type="GeneID" id="45024198"/>
<dbReference type="KEGG" id="bcz:BCE33L4068"/>
<dbReference type="PATRIC" id="fig|288681.22.peg.1322"/>
<dbReference type="Proteomes" id="UP000002612">
    <property type="component" value="Chromosome"/>
</dbReference>
<dbReference type="GO" id="GO:0004222">
    <property type="term" value="F:metalloendopeptidase activity"/>
    <property type="evidence" value="ECO:0007669"/>
    <property type="project" value="UniProtKB-UniRule"/>
</dbReference>
<dbReference type="GO" id="GO:0006508">
    <property type="term" value="P:proteolysis"/>
    <property type="evidence" value="ECO:0007669"/>
    <property type="project" value="UniProtKB-UniRule"/>
</dbReference>
<dbReference type="GO" id="GO:0009847">
    <property type="term" value="P:spore germination"/>
    <property type="evidence" value="ECO:0007669"/>
    <property type="project" value="UniProtKB-UniRule"/>
</dbReference>
<dbReference type="FunFam" id="3.40.50.1450:FF:000004">
    <property type="entry name" value="Germination protease"/>
    <property type="match status" value="1"/>
</dbReference>
<dbReference type="Gene3D" id="3.40.50.1450">
    <property type="entry name" value="HybD-like"/>
    <property type="match status" value="1"/>
</dbReference>
<dbReference type="HAMAP" id="MF_00626">
    <property type="entry name" value="Germination_prot"/>
    <property type="match status" value="1"/>
</dbReference>
<dbReference type="InterPro" id="IPR023430">
    <property type="entry name" value="Pept_HybD-like_dom_sf"/>
</dbReference>
<dbReference type="InterPro" id="IPR005080">
    <property type="entry name" value="Peptidase_A25"/>
</dbReference>
<dbReference type="NCBIfam" id="TIGR01441">
    <property type="entry name" value="GPR"/>
    <property type="match status" value="1"/>
</dbReference>
<dbReference type="Pfam" id="PF03418">
    <property type="entry name" value="Peptidase_A25"/>
    <property type="match status" value="1"/>
</dbReference>
<dbReference type="PIRSF" id="PIRSF019549">
    <property type="entry name" value="Peptidase_A25"/>
    <property type="match status" value="1"/>
</dbReference>
<dbReference type="SUPFAM" id="SSF53163">
    <property type="entry name" value="HybD-like"/>
    <property type="match status" value="1"/>
</dbReference>
<protein>
    <recommendedName>
        <fullName evidence="1">Germination protease</fullName>
        <ecNumber evidence="1">3.4.24.78</ecNumber>
    </recommendedName>
    <alternativeName>
        <fullName evidence="1">GPR endopeptidase</fullName>
    </alternativeName>
    <alternativeName>
        <fullName evidence="1">Germination proteinase</fullName>
    </alternativeName>
    <alternativeName>
        <fullName evidence="1">Spore protease</fullName>
    </alternativeName>
</protein>
<comment type="function">
    <text evidence="1">Initiates the rapid degradation of small, acid-soluble proteins during spore germination.</text>
</comment>
<comment type="catalytic activity">
    <reaction evidence="1">
        <text>Endopeptidase action with P4 Glu or Asp, P1 preferably Glu &gt; Asp, P1' hydrophobic and P2' Ala.</text>
        <dbReference type="EC" id="3.4.24.78"/>
    </reaction>
</comment>
<comment type="subunit">
    <text evidence="1">Homotetramer.</text>
</comment>
<comment type="PTM">
    <text evidence="1">Autoproteolytically processed. The inactive tetrameric zymogen termed p46 autoprocesses to a smaller form termed p41, which is active only during spore germination.</text>
</comment>
<comment type="similarity">
    <text evidence="1">Belongs to the peptidase A25 family.</text>
</comment>
<name>GPR_BACCZ</name>
<proteinExistence type="inferred from homology"/>
<evidence type="ECO:0000255" key="1">
    <source>
        <dbReference type="HAMAP-Rule" id="MF_00626"/>
    </source>
</evidence>
<organism>
    <name type="scientific">Bacillus cereus (strain ZK / E33L)</name>
    <dbReference type="NCBI Taxonomy" id="288681"/>
    <lineage>
        <taxon>Bacteria</taxon>
        <taxon>Bacillati</taxon>
        <taxon>Bacillota</taxon>
        <taxon>Bacilli</taxon>
        <taxon>Bacillales</taxon>
        <taxon>Bacillaceae</taxon>
        <taxon>Bacillus</taxon>
        <taxon>Bacillus cereus group</taxon>
    </lineage>
</organism>
<keyword id="KW-0378">Hydrolase</keyword>
<keyword id="KW-0645">Protease</keyword>
<keyword id="KW-0865">Zymogen</keyword>